<organism>
    <name type="scientific">Salmonella heidelberg (strain SL476)</name>
    <dbReference type="NCBI Taxonomy" id="454169"/>
    <lineage>
        <taxon>Bacteria</taxon>
        <taxon>Pseudomonadati</taxon>
        <taxon>Pseudomonadota</taxon>
        <taxon>Gammaproteobacteria</taxon>
        <taxon>Enterobacterales</taxon>
        <taxon>Enterobacteriaceae</taxon>
        <taxon>Salmonella</taxon>
    </lineage>
</organism>
<evidence type="ECO:0000255" key="1">
    <source>
        <dbReference type="HAMAP-Rule" id="MF_00148"/>
    </source>
</evidence>
<dbReference type="EC" id="3.2.2.27" evidence="1"/>
<dbReference type="EMBL" id="CP001120">
    <property type="protein sequence ID" value="ACF66979.1"/>
    <property type="molecule type" value="Genomic_DNA"/>
</dbReference>
<dbReference type="RefSeq" id="WP_000179978.1">
    <property type="nucleotide sequence ID" value="NC_011083.1"/>
</dbReference>
<dbReference type="SMR" id="B4TE28"/>
<dbReference type="KEGG" id="seh:SeHA_C2863"/>
<dbReference type="HOGENOM" id="CLU_032162_3_0_6"/>
<dbReference type="Proteomes" id="UP000001866">
    <property type="component" value="Chromosome"/>
</dbReference>
<dbReference type="GO" id="GO:0005737">
    <property type="term" value="C:cytoplasm"/>
    <property type="evidence" value="ECO:0007669"/>
    <property type="project" value="UniProtKB-SubCell"/>
</dbReference>
<dbReference type="GO" id="GO:0004844">
    <property type="term" value="F:uracil DNA N-glycosylase activity"/>
    <property type="evidence" value="ECO:0007669"/>
    <property type="project" value="UniProtKB-UniRule"/>
</dbReference>
<dbReference type="GO" id="GO:0097510">
    <property type="term" value="P:base-excision repair, AP site formation via deaminated base removal"/>
    <property type="evidence" value="ECO:0007669"/>
    <property type="project" value="TreeGrafter"/>
</dbReference>
<dbReference type="CDD" id="cd10027">
    <property type="entry name" value="UDG-F1-like"/>
    <property type="match status" value="1"/>
</dbReference>
<dbReference type="FunFam" id="3.40.470.10:FF:000001">
    <property type="entry name" value="Uracil-DNA glycosylase"/>
    <property type="match status" value="1"/>
</dbReference>
<dbReference type="Gene3D" id="3.40.470.10">
    <property type="entry name" value="Uracil-DNA glycosylase-like domain"/>
    <property type="match status" value="1"/>
</dbReference>
<dbReference type="HAMAP" id="MF_00148">
    <property type="entry name" value="UDG"/>
    <property type="match status" value="1"/>
</dbReference>
<dbReference type="InterPro" id="IPR002043">
    <property type="entry name" value="UDG_fam1"/>
</dbReference>
<dbReference type="InterPro" id="IPR018085">
    <property type="entry name" value="Ura-DNA_Glyclase_AS"/>
</dbReference>
<dbReference type="InterPro" id="IPR005122">
    <property type="entry name" value="Uracil-DNA_glycosylase-like"/>
</dbReference>
<dbReference type="InterPro" id="IPR036895">
    <property type="entry name" value="Uracil-DNA_glycosylase-like_sf"/>
</dbReference>
<dbReference type="NCBIfam" id="NF003588">
    <property type="entry name" value="PRK05254.1-1"/>
    <property type="match status" value="1"/>
</dbReference>
<dbReference type="NCBIfam" id="NF003589">
    <property type="entry name" value="PRK05254.1-2"/>
    <property type="match status" value="1"/>
</dbReference>
<dbReference type="NCBIfam" id="NF003591">
    <property type="entry name" value="PRK05254.1-4"/>
    <property type="match status" value="1"/>
</dbReference>
<dbReference type="NCBIfam" id="NF003592">
    <property type="entry name" value="PRK05254.1-5"/>
    <property type="match status" value="1"/>
</dbReference>
<dbReference type="NCBIfam" id="TIGR00628">
    <property type="entry name" value="ung"/>
    <property type="match status" value="1"/>
</dbReference>
<dbReference type="PANTHER" id="PTHR11264">
    <property type="entry name" value="URACIL-DNA GLYCOSYLASE"/>
    <property type="match status" value="1"/>
</dbReference>
<dbReference type="PANTHER" id="PTHR11264:SF0">
    <property type="entry name" value="URACIL-DNA GLYCOSYLASE"/>
    <property type="match status" value="1"/>
</dbReference>
<dbReference type="Pfam" id="PF03167">
    <property type="entry name" value="UDG"/>
    <property type="match status" value="1"/>
</dbReference>
<dbReference type="SMART" id="SM00986">
    <property type="entry name" value="UDG"/>
    <property type="match status" value="1"/>
</dbReference>
<dbReference type="SMART" id="SM00987">
    <property type="entry name" value="UreE_C"/>
    <property type="match status" value="1"/>
</dbReference>
<dbReference type="SUPFAM" id="SSF52141">
    <property type="entry name" value="Uracil-DNA glycosylase-like"/>
    <property type="match status" value="1"/>
</dbReference>
<dbReference type="PROSITE" id="PS00130">
    <property type="entry name" value="U_DNA_GLYCOSYLASE"/>
    <property type="match status" value="1"/>
</dbReference>
<keyword id="KW-0963">Cytoplasm</keyword>
<keyword id="KW-0227">DNA damage</keyword>
<keyword id="KW-0234">DNA repair</keyword>
<keyword id="KW-0378">Hydrolase</keyword>
<gene>
    <name evidence="1" type="primary">ung</name>
    <name type="ordered locus">SeHA_C2863</name>
</gene>
<reference key="1">
    <citation type="journal article" date="2011" name="J. Bacteriol.">
        <title>Comparative genomics of 28 Salmonella enterica isolates: evidence for CRISPR-mediated adaptive sublineage evolution.</title>
        <authorList>
            <person name="Fricke W.F."/>
            <person name="Mammel M.K."/>
            <person name="McDermott P.F."/>
            <person name="Tartera C."/>
            <person name="White D.G."/>
            <person name="Leclerc J.E."/>
            <person name="Ravel J."/>
            <person name="Cebula T.A."/>
        </authorList>
    </citation>
    <scope>NUCLEOTIDE SEQUENCE [LARGE SCALE GENOMIC DNA]</scope>
    <source>
        <strain>SL476</strain>
    </source>
</reference>
<proteinExistence type="inferred from homology"/>
<accession>B4TE28</accession>
<name>UNG_SALHS</name>
<comment type="function">
    <text evidence="1">Excises uracil residues from the DNA which can arise as a result of misincorporation of dUMP residues by DNA polymerase or due to deamination of cytosine.</text>
</comment>
<comment type="catalytic activity">
    <reaction evidence="1">
        <text>Hydrolyzes single-stranded DNA or mismatched double-stranded DNA and polynucleotides, releasing free uracil.</text>
        <dbReference type="EC" id="3.2.2.27"/>
    </reaction>
</comment>
<comment type="subcellular location">
    <subcellularLocation>
        <location evidence="1">Cytoplasm</location>
    </subcellularLocation>
</comment>
<comment type="similarity">
    <text evidence="1">Belongs to the uracil-DNA glycosylase (UDG) superfamily. UNG family.</text>
</comment>
<feature type="chain" id="PRO_1000096605" description="Uracil-DNA glycosylase">
    <location>
        <begin position="1"/>
        <end position="229"/>
    </location>
</feature>
<feature type="active site" description="Proton acceptor" evidence="1">
    <location>
        <position position="64"/>
    </location>
</feature>
<sequence>MATELTWHDVLADEKQQPYFINTLHTVAGERQSGITVYPPQKDVFNAFRFTELGDVKVVILGQDPYHGPGQAHGLAFSVRPGIAPPPSLVNMYKELEASIPGFVRPAHGYLESWARQGVLLLNTVLTVRAGQAHSHASLGWETFTDKVISLINQHREGVVFLLWGSHAQKKGAIIDPQRHHILKAPHPSPLSAHRGFFGCNHFALTNQWLEQHGEKTIDWTPVLPAESE</sequence>
<protein>
    <recommendedName>
        <fullName evidence="1">Uracil-DNA glycosylase</fullName>
        <shortName evidence="1">UDG</shortName>
        <ecNumber evidence="1">3.2.2.27</ecNumber>
    </recommendedName>
</protein>